<sequence length="361" mass="40331">MRFSDNLAKILDKYENLGNKLSSGIMGDEFVKASKEYAELEDVVAKIKEYNKAKSELEEANNFKLEVGLDNATLEMIEDEIHTLENSLPKLERAVKIALLPKDDADSKSAIIEVRAGSGGEEAALFAAVLFNMYQRYAELKGWRFEILAISDTGIGGYKEASASIKGKDVFSKLKFESGVHRVQRVPETESQGRIHTSAATVAVLPEAEEVDIQIEDKDLRIDTYRASGAGGQHVNTTDSAVRITHIPTGITVALQDEKSQHKNKAKALKILRARIYEEERRKKEQERADSRRGQVGSGDRSERIRTYNFPQGRVSDHRINLTLYKIDEVVKNGQLDEFVEALIADDEAKKLLGIYSKNTA</sequence>
<evidence type="ECO:0000255" key="1">
    <source>
        <dbReference type="HAMAP-Rule" id="MF_00093"/>
    </source>
</evidence>
<evidence type="ECO:0000256" key="2">
    <source>
        <dbReference type="SAM" id="MobiDB-lite"/>
    </source>
</evidence>
<comment type="function">
    <text evidence="1">Peptide chain release factor 1 directs the termination of translation in response to the peptide chain termination codons UAG and UAA.</text>
</comment>
<comment type="subcellular location">
    <subcellularLocation>
        <location evidence="1">Cytoplasm</location>
    </subcellularLocation>
</comment>
<comment type="PTM">
    <text evidence="1">Methylated by PrmC. Methylation increases the termination efficiency of RF1.</text>
</comment>
<comment type="similarity">
    <text evidence="1">Belongs to the prokaryotic/mitochondrial release factor family.</text>
</comment>
<protein>
    <recommendedName>
        <fullName evidence="1">Peptide chain release factor 1</fullName>
        <shortName evidence="1">RF-1</shortName>
    </recommendedName>
</protein>
<keyword id="KW-0963">Cytoplasm</keyword>
<keyword id="KW-0488">Methylation</keyword>
<keyword id="KW-0648">Protein biosynthesis</keyword>
<organism>
    <name type="scientific">Rickettsia massiliae (strain Mtu5)</name>
    <dbReference type="NCBI Taxonomy" id="416276"/>
    <lineage>
        <taxon>Bacteria</taxon>
        <taxon>Pseudomonadati</taxon>
        <taxon>Pseudomonadota</taxon>
        <taxon>Alphaproteobacteria</taxon>
        <taxon>Rickettsiales</taxon>
        <taxon>Rickettsiaceae</taxon>
        <taxon>Rickettsieae</taxon>
        <taxon>Rickettsia</taxon>
        <taxon>spotted fever group</taxon>
    </lineage>
</organism>
<name>RF1_RICM5</name>
<accession>A8F1S1</accession>
<feature type="chain" id="PRO_1000057618" description="Peptide chain release factor 1">
    <location>
        <begin position="1"/>
        <end position="361"/>
    </location>
</feature>
<feature type="region of interest" description="Disordered" evidence="2">
    <location>
        <begin position="280"/>
        <end position="307"/>
    </location>
</feature>
<feature type="compositionally biased region" description="Basic and acidic residues" evidence="2">
    <location>
        <begin position="280"/>
        <end position="293"/>
    </location>
</feature>
<feature type="modified residue" description="N5-methylglutamine" evidence="1">
    <location>
        <position position="233"/>
    </location>
</feature>
<reference key="1">
    <citation type="journal article" date="2007" name="Genome Res.">
        <title>Lateral gene transfer between obligate intracellular bacteria: evidence from the Rickettsia massiliae genome.</title>
        <authorList>
            <person name="Blanc G."/>
            <person name="Ogata H."/>
            <person name="Robert C."/>
            <person name="Audic S."/>
            <person name="Claverie J.-M."/>
            <person name="Raoult D."/>
        </authorList>
    </citation>
    <scope>NUCLEOTIDE SEQUENCE [LARGE SCALE GENOMIC DNA]</scope>
    <source>
        <strain>Mtu5</strain>
    </source>
</reference>
<proteinExistence type="inferred from homology"/>
<gene>
    <name evidence="1" type="primary">prfA</name>
    <name type="ordered locus">RMA_0703</name>
</gene>
<dbReference type="EMBL" id="CP000683">
    <property type="protein sequence ID" value="ABV84857.1"/>
    <property type="molecule type" value="Genomic_DNA"/>
</dbReference>
<dbReference type="RefSeq" id="WP_012152832.1">
    <property type="nucleotide sequence ID" value="NC_009900.1"/>
</dbReference>
<dbReference type="SMR" id="A8F1S1"/>
<dbReference type="KEGG" id="rms:RMA_0703"/>
<dbReference type="HOGENOM" id="CLU_036856_0_1_5"/>
<dbReference type="Proteomes" id="UP000001311">
    <property type="component" value="Chromosome"/>
</dbReference>
<dbReference type="GO" id="GO:0005737">
    <property type="term" value="C:cytoplasm"/>
    <property type="evidence" value="ECO:0007669"/>
    <property type="project" value="UniProtKB-SubCell"/>
</dbReference>
<dbReference type="GO" id="GO:0016149">
    <property type="term" value="F:translation release factor activity, codon specific"/>
    <property type="evidence" value="ECO:0007669"/>
    <property type="project" value="UniProtKB-UniRule"/>
</dbReference>
<dbReference type="FunFam" id="3.30.160.20:FF:000004">
    <property type="entry name" value="Peptide chain release factor 1"/>
    <property type="match status" value="1"/>
</dbReference>
<dbReference type="FunFam" id="3.30.70.1660:FF:000002">
    <property type="entry name" value="Peptide chain release factor 1"/>
    <property type="match status" value="1"/>
</dbReference>
<dbReference type="FunFam" id="3.30.70.1660:FF:000004">
    <property type="entry name" value="Peptide chain release factor 1"/>
    <property type="match status" value="1"/>
</dbReference>
<dbReference type="Gene3D" id="3.30.160.20">
    <property type="match status" value="1"/>
</dbReference>
<dbReference type="Gene3D" id="3.30.70.1660">
    <property type="match status" value="1"/>
</dbReference>
<dbReference type="Gene3D" id="6.10.140.1950">
    <property type="match status" value="1"/>
</dbReference>
<dbReference type="HAMAP" id="MF_00093">
    <property type="entry name" value="Rel_fac_1"/>
    <property type="match status" value="1"/>
</dbReference>
<dbReference type="InterPro" id="IPR005139">
    <property type="entry name" value="PCRF"/>
</dbReference>
<dbReference type="InterPro" id="IPR000352">
    <property type="entry name" value="Pep_chain_release_fac_I"/>
</dbReference>
<dbReference type="InterPro" id="IPR045853">
    <property type="entry name" value="Pep_chain_release_fac_I_sf"/>
</dbReference>
<dbReference type="InterPro" id="IPR050057">
    <property type="entry name" value="Prokaryotic/Mito_RF"/>
</dbReference>
<dbReference type="InterPro" id="IPR004373">
    <property type="entry name" value="RF-1"/>
</dbReference>
<dbReference type="NCBIfam" id="TIGR00019">
    <property type="entry name" value="prfA"/>
    <property type="match status" value="1"/>
</dbReference>
<dbReference type="NCBIfam" id="NF001859">
    <property type="entry name" value="PRK00591.1"/>
    <property type="match status" value="1"/>
</dbReference>
<dbReference type="PANTHER" id="PTHR43804">
    <property type="entry name" value="LD18447P"/>
    <property type="match status" value="1"/>
</dbReference>
<dbReference type="PANTHER" id="PTHR43804:SF7">
    <property type="entry name" value="LD18447P"/>
    <property type="match status" value="1"/>
</dbReference>
<dbReference type="Pfam" id="PF03462">
    <property type="entry name" value="PCRF"/>
    <property type="match status" value="1"/>
</dbReference>
<dbReference type="Pfam" id="PF00472">
    <property type="entry name" value="RF-1"/>
    <property type="match status" value="1"/>
</dbReference>
<dbReference type="SMART" id="SM00937">
    <property type="entry name" value="PCRF"/>
    <property type="match status" value="1"/>
</dbReference>
<dbReference type="SUPFAM" id="SSF75620">
    <property type="entry name" value="Release factor"/>
    <property type="match status" value="1"/>
</dbReference>
<dbReference type="PROSITE" id="PS00745">
    <property type="entry name" value="RF_PROK_I"/>
    <property type="match status" value="1"/>
</dbReference>